<organism>
    <name type="scientific">Mycoplasmopsis agalactiae (strain NCTC 10123 / CIP 59.7 / PG2)</name>
    <name type="common">Mycoplasma agalactiae</name>
    <dbReference type="NCBI Taxonomy" id="347257"/>
    <lineage>
        <taxon>Bacteria</taxon>
        <taxon>Bacillati</taxon>
        <taxon>Mycoplasmatota</taxon>
        <taxon>Mycoplasmoidales</taxon>
        <taxon>Metamycoplasmataceae</taxon>
        <taxon>Mycoplasmopsis</taxon>
    </lineage>
</organism>
<protein>
    <recommendedName>
        <fullName evidence="1">Thymidylate kinase</fullName>
        <ecNumber evidence="1">2.7.4.9</ecNumber>
    </recommendedName>
    <alternativeName>
        <fullName evidence="1">dTMP kinase</fullName>
    </alternativeName>
</protein>
<accession>A5IZC6</accession>
<feature type="chain" id="PRO_1000097412" description="Thymidylate kinase">
    <location>
        <begin position="1"/>
        <end position="215"/>
    </location>
</feature>
<feature type="binding site" evidence="1">
    <location>
        <begin position="7"/>
        <end position="14"/>
    </location>
    <ligand>
        <name>ATP</name>
        <dbReference type="ChEBI" id="CHEBI:30616"/>
    </ligand>
</feature>
<name>KTHY_MYCAP</name>
<sequence length="215" mass="24911">MFITFEGLDGSGKTTIVQKLVEKLLEKKPALSFIVTREPGGKNVRESEKIRELILDKESRLSPISEALLYTASRRIHIEKVILPALKENKLVLCDRYIDSFYAYQGIVRGLGLSFAKQLTEMVIESTIPDITIFIDITAEQSEYRRNVSRLISDRLDSESLEFHKKVFDAYKEVINLDPKRFIIVNGLQSIPEILDEIVEKLFQNKKFDEWWKNN</sequence>
<dbReference type="EC" id="2.7.4.9" evidence="1"/>
<dbReference type="EMBL" id="CU179680">
    <property type="protein sequence ID" value="CAL59385.1"/>
    <property type="molecule type" value="Genomic_DNA"/>
</dbReference>
<dbReference type="RefSeq" id="WP_011949838.1">
    <property type="nucleotide sequence ID" value="NC_009497.1"/>
</dbReference>
<dbReference type="SMR" id="A5IZC6"/>
<dbReference type="STRING" id="347257.MAG6850"/>
<dbReference type="GeneID" id="93358411"/>
<dbReference type="KEGG" id="maa:MAG6850"/>
<dbReference type="HOGENOM" id="CLU_049131_0_2_14"/>
<dbReference type="Proteomes" id="UP000007065">
    <property type="component" value="Chromosome"/>
</dbReference>
<dbReference type="GO" id="GO:0005829">
    <property type="term" value="C:cytosol"/>
    <property type="evidence" value="ECO:0007669"/>
    <property type="project" value="TreeGrafter"/>
</dbReference>
<dbReference type="GO" id="GO:0005524">
    <property type="term" value="F:ATP binding"/>
    <property type="evidence" value="ECO:0007669"/>
    <property type="project" value="UniProtKB-UniRule"/>
</dbReference>
<dbReference type="GO" id="GO:0004798">
    <property type="term" value="F:dTMP kinase activity"/>
    <property type="evidence" value="ECO:0007669"/>
    <property type="project" value="UniProtKB-UniRule"/>
</dbReference>
<dbReference type="GO" id="GO:0006233">
    <property type="term" value="P:dTDP biosynthetic process"/>
    <property type="evidence" value="ECO:0007669"/>
    <property type="project" value="InterPro"/>
</dbReference>
<dbReference type="GO" id="GO:0006235">
    <property type="term" value="P:dTTP biosynthetic process"/>
    <property type="evidence" value="ECO:0007669"/>
    <property type="project" value="UniProtKB-UniRule"/>
</dbReference>
<dbReference type="GO" id="GO:0006227">
    <property type="term" value="P:dUDP biosynthetic process"/>
    <property type="evidence" value="ECO:0007669"/>
    <property type="project" value="TreeGrafter"/>
</dbReference>
<dbReference type="CDD" id="cd01672">
    <property type="entry name" value="TMPK"/>
    <property type="match status" value="1"/>
</dbReference>
<dbReference type="FunFam" id="3.40.50.300:FF:000225">
    <property type="entry name" value="Thymidylate kinase"/>
    <property type="match status" value="1"/>
</dbReference>
<dbReference type="Gene3D" id="3.40.50.300">
    <property type="entry name" value="P-loop containing nucleotide triphosphate hydrolases"/>
    <property type="match status" value="1"/>
</dbReference>
<dbReference type="HAMAP" id="MF_00165">
    <property type="entry name" value="Thymidylate_kinase"/>
    <property type="match status" value="1"/>
</dbReference>
<dbReference type="InterPro" id="IPR027417">
    <property type="entry name" value="P-loop_NTPase"/>
</dbReference>
<dbReference type="InterPro" id="IPR039430">
    <property type="entry name" value="Thymidylate_kin-like_dom"/>
</dbReference>
<dbReference type="InterPro" id="IPR018094">
    <property type="entry name" value="Thymidylate_kinase"/>
</dbReference>
<dbReference type="NCBIfam" id="TIGR00041">
    <property type="entry name" value="DTMP_kinase"/>
    <property type="match status" value="1"/>
</dbReference>
<dbReference type="PANTHER" id="PTHR10344">
    <property type="entry name" value="THYMIDYLATE KINASE"/>
    <property type="match status" value="1"/>
</dbReference>
<dbReference type="PANTHER" id="PTHR10344:SF4">
    <property type="entry name" value="UMP-CMP KINASE 2, MITOCHONDRIAL"/>
    <property type="match status" value="1"/>
</dbReference>
<dbReference type="Pfam" id="PF02223">
    <property type="entry name" value="Thymidylate_kin"/>
    <property type="match status" value="1"/>
</dbReference>
<dbReference type="SUPFAM" id="SSF52540">
    <property type="entry name" value="P-loop containing nucleoside triphosphate hydrolases"/>
    <property type="match status" value="1"/>
</dbReference>
<proteinExistence type="inferred from homology"/>
<comment type="function">
    <text evidence="1">Phosphorylation of dTMP to form dTDP in both de novo and salvage pathways of dTTP synthesis.</text>
</comment>
<comment type="catalytic activity">
    <reaction evidence="1">
        <text>dTMP + ATP = dTDP + ADP</text>
        <dbReference type="Rhea" id="RHEA:13517"/>
        <dbReference type="ChEBI" id="CHEBI:30616"/>
        <dbReference type="ChEBI" id="CHEBI:58369"/>
        <dbReference type="ChEBI" id="CHEBI:63528"/>
        <dbReference type="ChEBI" id="CHEBI:456216"/>
        <dbReference type="EC" id="2.7.4.9"/>
    </reaction>
</comment>
<comment type="similarity">
    <text evidence="1">Belongs to the thymidylate kinase family.</text>
</comment>
<keyword id="KW-0067">ATP-binding</keyword>
<keyword id="KW-0418">Kinase</keyword>
<keyword id="KW-0545">Nucleotide biosynthesis</keyword>
<keyword id="KW-0547">Nucleotide-binding</keyword>
<keyword id="KW-1185">Reference proteome</keyword>
<keyword id="KW-0808">Transferase</keyword>
<gene>
    <name evidence="1" type="primary">tmk</name>
    <name type="ordered locus">MAG6850</name>
</gene>
<evidence type="ECO:0000255" key="1">
    <source>
        <dbReference type="HAMAP-Rule" id="MF_00165"/>
    </source>
</evidence>
<reference key="1">
    <citation type="journal article" date="2007" name="PLoS Genet.">
        <title>Being pathogenic, plastic, and sexual while living with a nearly minimal bacterial genome.</title>
        <authorList>
            <person name="Sirand-Pugnet P."/>
            <person name="Lartigue C."/>
            <person name="Marenda M."/>
            <person name="Jacob D."/>
            <person name="Barre A."/>
            <person name="Barbe V."/>
            <person name="Schenowitz C."/>
            <person name="Mangenot S."/>
            <person name="Couloux A."/>
            <person name="Segurens B."/>
            <person name="de Daruvar A."/>
            <person name="Blanchard A."/>
            <person name="Citti C."/>
        </authorList>
    </citation>
    <scope>NUCLEOTIDE SEQUENCE [LARGE SCALE GENOMIC DNA]</scope>
    <source>
        <strain>NCTC 10123 / CIP 59.7 / PG2</strain>
    </source>
</reference>